<sequence length="121" mass="14288">MTNYRSGRINEEMKREISNIIRNDMKDPRLSAMVSVTKVDVTKDQKYAKVFVSIYGEDKSKDDTFQVLKSSESFIRREVGHRVKLRNTPEIIIEMDNTIEYGMHINELLHKIKENEKHDNE</sequence>
<dbReference type="EMBL" id="CP000673">
    <property type="protein sequence ID" value="EDK33474.1"/>
    <property type="molecule type" value="Genomic_DNA"/>
</dbReference>
<dbReference type="RefSeq" id="WP_012101821.1">
    <property type="nucleotide sequence ID" value="NC_009706.1"/>
</dbReference>
<dbReference type="SMR" id="A5N843"/>
<dbReference type="STRING" id="431943.CKL_1432"/>
<dbReference type="KEGG" id="ckl:CKL_1432"/>
<dbReference type="eggNOG" id="COG0858">
    <property type="taxonomic scope" value="Bacteria"/>
</dbReference>
<dbReference type="HOGENOM" id="CLU_089475_6_3_9"/>
<dbReference type="Proteomes" id="UP000002411">
    <property type="component" value="Chromosome"/>
</dbReference>
<dbReference type="GO" id="GO:0005829">
    <property type="term" value="C:cytosol"/>
    <property type="evidence" value="ECO:0007669"/>
    <property type="project" value="TreeGrafter"/>
</dbReference>
<dbReference type="GO" id="GO:0043024">
    <property type="term" value="F:ribosomal small subunit binding"/>
    <property type="evidence" value="ECO:0007669"/>
    <property type="project" value="TreeGrafter"/>
</dbReference>
<dbReference type="GO" id="GO:0030490">
    <property type="term" value="P:maturation of SSU-rRNA"/>
    <property type="evidence" value="ECO:0007669"/>
    <property type="project" value="UniProtKB-UniRule"/>
</dbReference>
<dbReference type="Gene3D" id="3.30.300.20">
    <property type="match status" value="1"/>
</dbReference>
<dbReference type="HAMAP" id="MF_00003">
    <property type="entry name" value="RbfA"/>
    <property type="match status" value="1"/>
</dbReference>
<dbReference type="InterPro" id="IPR015946">
    <property type="entry name" value="KH_dom-like_a/b"/>
</dbReference>
<dbReference type="InterPro" id="IPR000238">
    <property type="entry name" value="RbfA"/>
</dbReference>
<dbReference type="InterPro" id="IPR023799">
    <property type="entry name" value="RbfA_dom_sf"/>
</dbReference>
<dbReference type="InterPro" id="IPR020053">
    <property type="entry name" value="Ribosome-bd_factorA_CS"/>
</dbReference>
<dbReference type="NCBIfam" id="TIGR00082">
    <property type="entry name" value="rbfA"/>
    <property type="match status" value="1"/>
</dbReference>
<dbReference type="PANTHER" id="PTHR33515">
    <property type="entry name" value="RIBOSOME-BINDING FACTOR A, CHLOROPLASTIC-RELATED"/>
    <property type="match status" value="1"/>
</dbReference>
<dbReference type="PANTHER" id="PTHR33515:SF1">
    <property type="entry name" value="RIBOSOME-BINDING FACTOR A, CHLOROPLASTIC-RELATED"/>
    <property type="match status" value="1"/>
</dbReference>
<dbReference type="Pfam" id="PF02033">
    <property type="entry name" value="RBFA"/>
    <property type="match status" value="1"/>
</dbReference>
<dbReference type="SUPFAM" id="SSF89919">
    <property type="entry name" value="Ribosome-binding factor A, RbfA"/>
    <property type="match status" value="1"/>
</dbReference>
<dbReference type="PROSITE" id="PS01319">
    <property type="entry name" value="RBFA"/>
    <property type="match status" value="1"/>
</dbReference>
<protein>
    <recommendedName>
        <fullName evidence="1">Ribosome-binding factor A</fullName>
    </recommendedName>
</protein>
<keyword id="KW-0963">Cytoplasm</keyword>
<keyword id="KW-1185">Reference proteome</keyword>
<keyword id="KW-0690">Ribosome biogenesis</keyword>
<reference key="1">
    <citation type="journal article" date="2008" name="Proc. Natl. Acad. Sci. U.S.A.">
        <title>The genome of Clostridium kluyveri, a strict anaerobe with unique metabolic features.</title>
        <authorList>
            <person name="Seedorf H."/>
            <person name="Fricke W.F."/>
            <person name="Veith B."/>
            <person name="Brueggemann H."/>
            <person name="Liesegang H."/>
            <person name="Strittmatter A."/>
            <person name="Miethke M."/>
            <person name="Buckel W."/>
            <person name="Hinderberger J."/>
            <person name="Li F."/>
            <person name="Hagemeier C."/>
            <person name="Thauer R.K."/>
            <person name="Gottschalk G."/>
        </authorList>
    </citation>
    <scope>NUCLEOTIDE SEQUENCE [LARGE SCALE GENOMIC DNA]</scope>
    <source>
        <strain>ATCC 8527 / DSM 555 / NBRC 12016 / NCIMB 10680 / K1</strain>
    </source>
</reference>
<name>RBFA_CLOK5</name>
<organism>
    <name type="scientific">Clostridium kluyveri (strain ATCC 8527 / DSM 555 / NBRC 12016 / NCIMB 10680 / K1)</name>
    <dbReference type="NCBI Taxonomy" id="431943"/>
    <lineage>
        <taxon>Bacteria</taxon>
        <taxon>Bacillati</taxon>
        <taxon>Bacillota</taxon>
        <taxon>Clostridia</taxon>
        <taxon>Eubacteriales</taxon>
        <taxon>Clostridiaceae</taxon>
        <taxon>Clostridium</taxon>
    </lineage>
</organism>
<accession>A5N843</accession>
<gene>
    <name evidence="1" type="primary">rbfA</name>
    <name type="ordered locus">CKL_1432</name>
</gene>
<feature type="chain" id="PRO_1000073756" description="Ribosome-binding factor A">
    <location>
        <begin position="1"/>
        <end position="121"/>
    </location>
</feature>
<comment type="function">
    <text evidence="1">One of several proteins that assist in the late maturation steps of the functional core of the 30S ribosomal subunit. Associates with free 30S ribosomal subunits (but not with 30S subunits that are part of 70S ribosomes or polysomes). Required for efficient processing of 16S rRNA. May interact with the 5'-terminal helix region of 16S rRNA.</text>
</comment>
<comment type="subunit">
    <text evidence="1">Monomer. Binds 30S ribosomal subunits, but not 50S ribosomal subunits or 70S ribosomes.</text>
</comment>
<comment type="subcellular location">
    <subcellularLocation>
        <location evidence="1">Cytoplasm</location>
    </subcellularLocation>
</comment>
<comment type="similarity">
    <text evidence="1">Belongs to the RbfA family.</text>
</comment>
<proteinExistence type="inferred from homology"/>
<evidence type="ECO:0000255" key="1">
    <source>
        <dbReference type="HAMAP-Rule" id="MF_00003"/>
    </source>
</evidence>